<evidence type="ECO:0000255" key="1">
    <source>
        <dbReference type="PROSITE-ProRule" id="PRU00040"/>
    </source>
</evidence>
<evidence type="ECO:0000269" key="2">
    <source>
    </source>
</evidence>
<evidence type="ECO:0000269" key="3">
    <source>
    </source>
</evidence>
<evidence type="ECO:0000305" key="4"/>
<evidence type="ECO:0000305" key="5">
    <source>
    </source>
</evidence>
<reference key="1">
    <citation type="journal article" date="2010" name="Toxicon">
        <title>Characterization and molecular cloning of one novel C-type lectin from the venom of Taiwan habu (Trimeresurus mucrosquamatus).</title>
        <authorList>
            <person name="Chen Y.S."/>
            <person name="Huang C.H."/>
            <person name="Chiou S.H."/>
        </authorList>
    </citation>
    <scope>NUCLEOTIDE SEQUENCE [GENOMIC DNA / MRNA]</scope>
    <scope>PROTEIN SEQUENCE OF 24-48</scope>
    <scope>FUNCTION</scope>
    <scope>SUBUNIT</scope>
    <scope>3D-STRUCTURE MODELING</scope>
    <source>
        <tissue>Venom</tissue>
        <tissue>Venom gland</tissue>
    </source>
</reference>
<reference key="2">
    <citation type="journal article" date="1996" name="J. Protein Chem.">
        <title>Isolation of a venom factor devoid of proteolytic activity from Taiwan habu (Trimeresurus mucrosquamatus): N-terminal sequence homology and no functional similarity to factors IX/X-binding proteins and botrocetin.</title>
        <authorList>
            <person name="Chiou S.-H."/>
            <person name="Huang K.-F."/>
            <person name="Chow L.-P."/>
            <person name="Tsugita A."/>
            <person name="Wu S.-H."/>
        </authorList>
    </citation>
    <scope>PARTIAL PROTEIN SEQUENCE</scope>
    <scope>FUNCTION</scope>
    <scope>SUBUNIT</scope>
    <source>
        <tissue>Venom</tissue>
    </source>
</reference>
<organism>
    <name type="scientific">Protobothrops mucrosquamatus</name>
    <name type="common">Taiwan habu</name>
    <name type="synonym">Trimeresurus mucrosquamatus</name>
    <dbReference type="NCBI Taxonomy" id="103944"/>
    <lineage>
        <taxon>Eukaryota</taxon>
        <taxon>Metazoa</taxon>
        <taxon>Chordata</taxon>
        <taxon>Craniata</taxon>
        <taxon>Vertebrata</taxon>
        <taxon>Euteleostomi</taxon>
        <taxon>Lepidosauria</taxon>
        <taxon>Squamata</taxon>
        <taxon>Bifurcata</taxon>
        <taxon>Unidentata</taxon>
        <taxon>Episquamata</taxon>
        <taxon>Toxicofera</taxon>
        <taxon>Serpentes</taxon>
        <taxon>Colubroidea</taxon>
        <taxon>Viperidae</taxon>
        <taxon>Crotalinae</taxon>
        <taxon>Protobothrops</taxon>
    </lineage>
</organism>
<protein>
    <recommendedName>
        <fullName>Snaclec trimecetin subunit beta</fullName>
    </recommendedName>
</protein>
<dbReference type="EMBL" id="AY871786">
    <property type="protein sequence ID" value="AAW69916.1"/>
    <property type="molecule type" value="Genomic_DNA"/>
</dbReference>
<dbReference type="SMR" id="Q5FZI5"/>
<dbReference type="GO" id="GO:0005576">
    <property type="term" value="C:extracellular region"/>
    <property type="evidence" value="ECO:0007669"/>
    <property type="project" value="UniProtKB-SubCell"/>
</dbReference>
<dbReference type="GO" id="GO:0090729">
    <property type="term" value="F:toxin activity"/>
    <property type="evidence" value="ECO:0007669"/>
    <property type="project" value="UniProtKB-KW"/>
</dbReference>
<dbReference type="FunFam" id="3.10.100.10:FF:000087">
    <property type="entry name" value="Snaclec rhodocetin subunit delta"/>
    <property type="match status" value="1"/>
</dbReference>
<dbReference type="Gene3D" id="3.10.100.10">
    <property type="entry name" value="Mannose-Binding Protein A, subunit A"/>
    <property type="match status" value="1"/>
</dbReference>
<dbReference type="InterPro" id="IPR001304">
    <property type="entry name" value="C-type_lectin-like"/>
</dbReference>
<dbReference type="InterPro" id="IPR016186">
    <property type="entry name" value="C-type_lectin-like/link_sf"/>
</dbReference>
<dbReference type="InterPro" id="IPR050111">
    <property type="entry name" value="C-type_lectin/snaclec_domain"/>
</dbReference>
<dbReference type="InterPro" id="IPR018378">
    <property type="entry name" value="C-type_lectin_CS"/>
</dbReference>
<dbReference type="InterPro" id="IPR016187">
    <property type="entry name" value="CTDL_fold"/>
</dbReference>
<dbReference type="PANTHER" id="PTHR22803">
    <property type="entry name" value="MANNOSE, PHOSPHOLIPASE, LECTIN RECEPTOR RELATED"/>
    <property type="match status" value="1"/>
</dbReference>
<dbReference type="Pfam" id="PF00059">
    <property type="entry name" value="Lectin_C"/>
    <property type="match status" value="1"/>
</dbReference>
<dbReference type="SMART" id="SM00034">
    <property type="entry name" value="CLECT"/>
    <property type="match status" value="1"/>
</dbReference>
<dbReference type="SUPFAM" id="SSF56436">
    <property type="entry name" value="C-type lectin-like"/>
    <property type="match status" value="1"/>
</dbReference>
<dbReference type="PROSITE" id="PS00615">
    <property type="entry name" value="C_TYPE_LECTIN_1"/>
    <property type="match status" value="1"/>
</dbReference>
<dbReference type="PROSITE" id="PS50041">
    <property type="entry name" value="C_TYPE_LECTIN_2"/>
    <property type="match status" value="1"/>
</dbReference>
<proteinExistence type="evidence at protein level"/>
<sequence>MGRFIFVSFGLLVVFLSLSGTAADCPSDWSSFRRYCYQVFQQKMNWEDAEKFCTQQHRGSHLVSFHSSEEVDFVVSKTLPILKANFVWMGLSNVWNECAKEWSDGTKLDYKAWSGQSDCITSKTTDNQWLSMDCSSKRYVVCKF</sequence>
<comment type="function">
    <text evidence="2 3">Snaclec that induces platelet aggregation in either human platelet rich plasma (PRP) or washed platelet suspensions. It causes aggregation in a dose-dependent manner even in the absence of various platelet agonists such as ADP or von Willebrand factor (vWF). Interestingly, it does not induce aggregation in rabbit PRP. A monoclonal antibody against the platelet GPIb receptor blocks the aggregation induced by trimecetin, suggesting that it acts by binding to GPIb (GP1BA/GP1BB).</text>
</comment>
<comment type="subunit">
    <text evidence="2 3">Heterodimer of subunits alpha and beta; disulfide-linked.</text>
</comment>
<comment type="subcellular location">
    <subcellularLocation>
        <location>Secreted</location>
    </subcellularLocation>
</comment>
<comment type="tissue specificity">
    <text>Expressed by the venom gland.</text>
</comment>
<comment type="miscellaneous">
    <text evidence="5">Negative results: does not show affinity to coagulation factors IX and X in the presence of calcium ion. Also shows no inhibition on thrombin (PubMed:8968958).</text>
</comment>
<comment type="similarity">
    <text evidence="4">Belongs to the snaclec family.</text>
</comment>
<name>SLTB_PROMU</name>
<accession>Q5FZI5</accession>
<keyword id="KW-0903">Direct protein sequencing</keyword>
<keyword id="KW-1015">Disulfide bond</keyword>
<keyword id="KW-1199">Hemostasis impairing toxin</keyword>
<keyword id="KW-1202">Platelet aggregation activating toxin</keyword>
<keyword id="KW-0964">Secreted</keyword>
<keyword id="KW-0732">Signal</keyword>
<keyword id="KW-0800">Toxin</keyword>
<feature type="signal peptide" evidence="2">
    <location>
        <begin position="1"/>
        <end position="23"/>
    </location>
</feature>
<feature type="chain" id="PRO_0000355300" description="Snaclec trimecetin subunit beta">
    <location>
        <begin position="24"/>
        <end position="144"/>
    </location>
</feature>
<feature type="domain" description="C-type lectin" evidence="1">
    <location>
        <begin position="32"/>
        <end position="143"/>
    </location>
</feature>
<feature type="disulfide bond" evidence="1">
    <location>
        <begin position="25"/>
        <end position="36"/>
    </location>
</feature>
<feature type="disulfide bond" evidence="1">
    <location>
        <begin position="53"/>
        <end position="142"/>
    </location>
</feature>
<feature type="disulfide bond" description="Interchain (with C-102 in subunit alpha)" evidence="1">
    <location>
        <position position="98"/>
    </location>
</feature>
<feature type="disulfide bond" evidence="1">
    <location>
        <begin position="119"/>
        <end position="134"/>
    </location>
</feature>